<reference key="1">
    <citation type="journal article" date="2005" name="Nucleic Acids Res.">
        <title>Genome dynamics and diversity of Shigella species, the etiologic agents of bacillary dysentery.</title>
        <authorList>
            <person name="Yang F."/>
            <person name="Yang J."/>
            <person name="Zhang X."/>
            <person name="Chen L."/>
            <person name="Jiang Y."/>
            <person name="Yan Y."/>
            <person name="Tang X."/>
            <person name="Wang J."/>
            <person name="Xiong Z."/>
            <person name="Dong J."/>
            <person name="Xue Y."/>
            <person name="Zhu Y."/>
            <person name="Xu X."/>
            <person name="Sun L."/>
            <person name="Chen S."/>
            <person name="Nie H."/>
            <person name="Peng J."/>
            <person name="Xu J."/>
            <person name="Wang Y."/>
            <person name="Yuan Z."/>
            <person name="Wen Y."/>
            <person name="Yao Z."/>
            <person name="Shen Y."/>
            <person name="Qiang B."/>
            <person name="Hou Y."/>
            <person name="Yu J."/>
            <person name="Jin Q."/>
        </authorList>
    </citation>
    <scope>NUCLEOTIDE SEQUENCE [LARGE SCALE GENOMIC DNA]</scope>
    <source>
        <strain>Sb227</strain>
    </source>
</reference>
<comment type="function">
    <text evidence="1">Exhibits a very high intrinsic GTPase hydrolysis rate. Involved in the addition of a carboxymethylaminomethyl (cmnm) group at the wobble position (U34) of certain tRNAs, forming tRNA-cmnm(5)s(2)U34.</text>
</comment>
<comment type="cofactor">
    <cofactor evidence="1">
        <name>K(+)</name>
        <dbReference type="ChEBI" id="CHEBI:29103"/>
    </cofactor>
    <text evidence="1">Binds 1 potassium ion per subunit.</text>
</comment>
<comment type="subunit">
    <text evidence="1">Homodimer. Heterotetramer of two MnmE and two MnmG subunits.</text>
</comment>
<comment type="subcellular location">
    <subcellularLocation>
        <location evidence="1">Cytoplasm</location>
    </subcellularLocation>
</comment>
<comment type="similarity">
    <text evidence="1">Belongs to the TRAFAC class TrmE-Era-EngA-EngB-Septin-like GTPase superfamily. TrmE GTPase family.</text>
</comment>
<gene>
    <name evidence="1" type="primary">mnmE</name>
    <name evidence="1" type="synonym">trmE</name>
    <name type="ordered locus">SBO_3670</name>
</gene>
<proteinExistence type="inferred from homology"/>
<evidence type="ECO:0000255" key="1">
    <source>
        <dbReference type="HAMAP-Rule" id="MF_00379"/>
    </source>
</evidence>
<organism>
    <name type="scientific">Shigella boydii serotype 4 (strain Sb227)</name>
    <dbReference type="NCBI Taxonomy" id="300268"/>
    <lineage>
        <taxon>Bacteria</taxon>
        <taxon>Pseudomonadati</taxon>
        <taxon>Pseudomonadota</taxon>
        <taxon>Gammaproteobacteria</taxon>
        <taxon>Enterobacterales</taxon>
        <taxon>Enterobacteriaceae</taxon>
        <taxon>Shigella</taxon>
    </lineage>
</organism>
<protein>
    <recommendedName>
        <fullName evidence="1">tRNA modification GTPase MnmE</fullName>
        <ecNumber evidence="1">3.6.-.-</ecNumber>
    </recommendedName>
</protein>
<name>MNME_SHIBS</name>
<feature type="chain" id="PRO_1000048876" description="tRNA modification GTPase MnmE">
    <location>
        <begin position="1"/>
        <end position="454"/>
    </location>
</feature>
<feature type="domain" description="TrmE-type G">
    <location>
        <begin position="216"/>
        <end position="377"/>
    </location>
</feature>
<feature type="binding site" evidence="1">
    <location>
        <position position="23"/>
    </location>
    <ligand>
        <name>(6S)-5-formyl-5,6,7,8-tetrahydrofolate</name>
        <dbReference type="ChEBI" id="CHEBI:57457"/>
    </ligand>
</feature>
<feature type="binding site" evidence="1">
    <location>
        <position position="80"/>
    </location>
    <ligand>
        <name>(6S)-5-formyl-5,6,7,8-tetrahydrofolate</name>
        <dbReference type="ChEBI" id="CHEBI:57457"/>
    </ligand>
</feature>
<feature type="binding site" evidence="1">
    <location>
        <position position="120"/>
    </location>
    <ligand>
        <name>(6S)-5-formyl-5,6,7,8-tetrahydrofolate</name>
        <dbReference type="ChEBI" id="CHEBI:57457"/>
    </ligand>
</feature>
<feature type="binding site" evidence="1">
    <location>
        <begin position="226"/>
        <end position="231"/>
    </location>
    <ligand>
        <name>GTP</name>
        <dbReference type="ChEBI" id="CHEBI:37565"/>
    </ligand>
</feature>
<feature type="binding site" evidence="1">
    <location>
        <position position="226"/>
    </location>
    <ligand>
        <name>K(+)</name>
        <dbReference type="ChEBI" id="CHEBI:29103"/>
    </ligand>
</feature>
<feature type="binding site" evidence="1">
    <location>
        <position position="230"/>
    </location>
    <ligand>
        <name>Mg(2+)</name>
        <dbReference type="ChEBI" id="CHEBI:18420"/>
    </ligand>
</feature>
<feature type="binding site" evidence="1">
    <location>
        <begin position="245"/>
        <end position="251"/>
    </location>
    <ligand>
        <name>GTP</name>
        <dbReference type="ChEBI" id="CHEBI:37565"/>
    </ligand>
</feature>
<feature type="binding site" evidence="1">
    <location>
        <position position="245"/>
    </location>
    <ligand>
        <name>K(+)</name>
        <dbReference type="ChEBI" id="CHEBI:29103"/>
    </ligand>
</feature>
<feature type="binding site" evidence="1">
    <location>
        <position position="247"/>
    </location>
    <ligand>
        <name>K(+)</name>
        <dbReference type="ChEBI" id="CHEBI:29103"/>
    </ligand>
</feature>
<feature type="binding site" evidence="1">
    <location>
        <position position="250"/>
    </location>
    <ligand>
        <name>K(+)</name>
        <dbReference type="ChEBI" id="CHEBI:29103"/>
    </ligand>
</feature>
<feature type="binding site" evidence="1">
    <location>
        <position position="251"/>
    </location>
    <ligand>
        <name>Mg(2+)</name>
        <dbReference type="ChEBI" id="CHEBI:18420"/>
    </ligand>
</feature>
<feature type="binding site" evidence="1">
    <location>
        <begin position="270"/>
        <end position="273"/>
    </location>
    <ligand>
        <name>GTP</name>
        <dbReference type="ChEBI" id="CHEBI:37565"/>
    </ligand>
</feature>
<feature type="binding site" evidence="1">
    <location>
        <begin position="335"/>
        <end position="338"/>
    </location>
    <ligand>
        <name>GTP</name>
        <dbReference type="ChEBI" id="CHEBI:37565"/>
    </ligand>
</feature>
<feature type="binding site" evidence="1">
    <location>
        <begin position="358"/>
        <end position="360"/>
    </location>
    <ligand>
        <name>GTP</name>
        <dbReference type="ChEBI" id="CHEBI:37565"/>
    </ligand>
</feature>
<feature type="binding site" evidence="1">
    <location>
        <position position="454"/>
    </location>
    <ligand>
        <name>(6S)-5-formyl-5,6,7,8-tetrahydrofolate</name>
        <dbReference type="ChEBI" id="CHEBI:57457"/>
    </ligand>
</feature>
<keyword id="KW-0963">Cytoplasm</keyword>
<keyword id="KW-0342">GTP-binding</keyword>
<keyword id="KW-0378">Hydrolase</keyword>
<keyword id="KW-0460">Magnesium</keyword>
<keyword id="KW-0479">Metal-binding</keyword>
<keyword id="KW-0547">Nucleotide-binding</keyword>
<keyword id="KW-0630">Potassium</keyword>
<keyword id="KW-0819">tRNA processing</keyword>
<accession>Q31UW0</accession>
<sequence length="454" mass="49231">MSDNDTIVAQATPPGRGGVGILRISGFKAREVAETVLGKLPKPRYADYLPFKDADGSVLDQGIALWFPGPNSFTGEDVLELQGHGGPVILDLLLKRILTIPGLRIARPGEFSERAFLNDKLDLAQAEAIADLIDASSEQAARSALNSLQGAFSARVNHLVEALTHLRIYVEAAIDFPDEEIDFLSDGKIEAQLNDVIADLDAVRAEARQGSLLREGMKVVIAGRPNAGKSSLLNALAGREAAIVTDIAGTTRDVLREHIHIDGMPLHIIDTAGLREASDEVERIGIERAWQEIEQADRVLFMVDGTTTDAVDPAEIWPEFIARLPAKLPITVVRNKADITGETLGMSEVNGHALIRLSARTGEGVDVLRNHLKQSMGFDTNMEGGFLARRRHLQALEQAAEHLQQGKAQLLGAWAGELLAEELRLAQQNLSEITGEFTSDDLLGRIFSSFCIGK</sequence>
<dbReference type="EC" id="3.6.-.-" evidence="1"/>
<dbReference type="EMBL" id="CP000036">
    <property type="protein sequence ID" value="ABB68148.1"/>
    <property type="molecule type" value="Genomic_DNA"/>
</dbReference>
<dbReference type="RefSeq" id="WP_001282346.1">
    <property type="nucleotide sequence ID" value="NC_007613.1"/>
</dbReference>
<dbReference type="SMR" id="Q31UW0"/>
<dbReference type="GeneID" id="86861818"/>
<dbReference type="KEGG" id="sbo:SBO_3670"/>
<dbReference type="HOGENOM" id="CLU_019624_4_1_6"/>
<dbReference type="Proteomes" id="UP000007067">
    <property type="component" value="Chromosome"/>
</dbReference>
<dbReference type="GO" id="GO:0005829">
    <property type="term" value="C:cytosol"/>
    <property type="evidence" value="ECO:0007669"/>
    <property type="project" value="TreeGrafter"/>
</dbReference>
<dbReference type="GO" id="GO:0005525">
    <property type="term" value="F:GTP binding"/>
    <property type="evidence" value="ECO:0007669"/>
    <property type="project" value="UniProtKB-UniRule"/>
</dbReference>
<dbReference type="GO" id="GO:0003924">
    <property type="term" value="F:GTPase activity"/>
    <property type="evidence" value="ECO:0007669"/>
    <property type="project" value="UniProtKB-UniRule"/>
</dbReference>
<dbReference type="GO" id="GO:0046872">
    <property type="term" value="F:metal ion binding"/>
    <property type="evidence" value="ECO:0007669"/>
    <property type="project" value="UniProtKB-KW"/>
</dbReference>
<dbReference type="GO" id="GO:0030488">
    <property type="term" value="P:tRNA methylation"/>
    <property type="evidence" value="ECO:0007669"/>
    <property type="project" value="TreeGrafter"/>
</dbReference>
<dbReference type="GO" id="GO:0002098">
    <property type="term" value="P:tRNA wobble uridine modification"/>
    <property type="evidence" value="ECO:0007669"/>
    <property type="project" value="TreeGrafter"/>
</dbReference>
<dbReference type="CDD" id="cd04164">
    <property type="entry name" value="trmE"/>
    <property type="match status" value="1"/>
</dbReference>
<dbReference type="CDD" id="cd14858">
    <property type="entry name" value="TrmE_N"/>
    <property type="match status" value="1"/>
</dbReference>
<dbReference type="FunFam" id="3.30.1360.120:FF:000001">
    <property type="entry name" value="tRNA modification GTPase MnmE"/>
    <property type="match status" value="1"/>
</dbReference>
<dbReference type="FunFam" id="3.40.50.300:FF:000249">
    <property type="entry name" value="tRNA modification GTPase MnmE"/>
    <property type="match status" value="1"/>
</dbReference>
<dbReference type="Gene3D" id="3.40.50.300">
    <property type="entry name" value="P-loop containing nucleotide triphosphate hydrolases"/>
    <property type="match status" value="1"/>
</dbReference>
<dbReference type="Gene3D" id="3.30.1360.120">
    <property type="entry name" value="Probable tRNA modification gtpase trme, domain 1"/>
    <property type="match status" value="1"/>
</dbReference>
<dbReference type="Gene3D" id="1.20.120.430">
    <property type="entry name" value="tRNA modification GTPase MnmE domain 2"/>
    <property type="match status" value="1"/>
</dbReference>
<dbReference type="HAMAP" id="MF_00379">
    <property type="entry name" value="GTPase_MnmE"/>
    <property type="match status" value="1"/>
</dbReference>
<dbReference type="InterPro" id="IPR031168">
    <property type="entry name" value="G_TrmE"/>
</dbReference>
<dbReference type="InterPro" id="IPR006073">
    <property type="entry name" value="GTP-bd"/>
</dbReference>
<dbReference type="InterPro" id="IPR018948">
    <property type="entry name" value="GTP-bd_TrmE_N"/>
</dbReference>
<dbReference type="InterPro" id="IPR004520">
    <property type="entry name" value="GTPase_MnmE"/>
</dbReference>
<dbReference type="InterPro" id="IPR027368">
    <property type="entry name" value="MnmE_dom2"/>
</dbReference>
<dbReference type="InterPro" id="IPR025867">
    <property type="entry name" value="MnmE_helical"/>
</dbReference>
<dbReference type="InterPro" id="IPR027417">
    <property type="entry name" value="P-loop_NTPase"/>
</dbReference>
<dbReference type="InterPro" id="IPR005225">
    <property type="entry name" value="Small_GTP-bd"/>
</dbReference>
<dbReference type="InterPro" id="IPR027266">
    <property type="entry name" value="TrmE/GcvT_dom1"/>
</dbReference>
<dbReference type="NCBIfam" id="TIGR00450">
    <property type="entry name" value="mnmE_trmE_thdF"/>
    <property type="match status" value="1"/>
</dbReference>
<dbReference type="NCBIfam" id="NF003661">
    <property type="entry name" value="PRK05291.1-3"/>
    <property type="match status" value="1"/>
</dbReference>
<dbReference type="NCBIfam" id="TIGR00231">
    <property type="entry name" value="small_GTP"/>
    <property type="match status" value="1"/>
</dbReference>
<dbReference type="PANTHER" id="PTHR42714">
    <property type="entry name" value="TRNA MODIFICATION GTPASE GTPBP3"/>
    <property type="match status" value="1"/>
</dbReference>
<dbReference type="PANTHER" id="PTHR42714:SF2">
    <property type="entry name" value="TRNA MODIFICATION GTPASE GTPBP3, MITOCHONDRIAL"/>
    <property type="match status" value="1"/>
</dbReference>
<dbReference type="Pfam" id="PF01926">
    <property type="entry name" value="MMR_HSR1"/>
    <property type="match status" value="1"/>
</dbReference>
<dbReference type="Pfam" id="PF12631">
    <property type="entry name" value="MnmE_helical"/>
    <property type="match status" value="1"/>
</dbReference>
<dbReference type="Pfam" id="PF10396">
    <property type="entry name" value="TrmE_N"/>
    <property type="match status" value="1"/>
</dbReference>
<dbReference type="SUPFAM" id="SSF52540">
    <property type="entry name" value="P-loop containing nucleoside triphosphate hydrolases"/>
    <property type="match status" value="1"/>
</dbReference>
<dbReference type="SUPFAM" id="SSF116878">
    <property type="entry name" value="TrmE connector domain"/>
    <property type="match status" value="1"/>
</dbReference>
<dbReference type="PROSITE" id="PS51709">
    <property type="entry name" value="G_TRME"/>
    <property type="match status" value="1"/>
</dbReference>